<evidence type="ECO:0000250" key="1">
    <source>
        <dbReference type="UniProtKB" id="P03600"/>
    </source>
</evidence>
<evidence type="ECO:0000255" key="2">
    <source>
        <dbReference type="PROSITE-ProRule" id="PRU00539"/>
    </source>
</evidence>
<evidence type="ECO:0000255" key="3">
    <source>
        <dbReference type="PROSITE-ProRule" id="PRU01222"/>
    </source>
</evidence>
<dbReference type="EC" id="3.4.22.-"/>
<dbReference type="EC" id="2.7.7.48" evidence="2"/>
<dbReference type="EMBL" id="M84806">
    <property type="protein sequence ID" value="AAA42422.1"/>
    <property type="molecule type" value="Genomic_RNA"/>
</dbReference>
<dbReference type="PIR" id="JQ1898">
    <property type="entry name" value="JQ1898"/>
</dbReference>
<dbReference type="SMR" id="Q02941"/>
<dbReference type="GO" id="GO:0044165">
    <property type="term" value="C:host cell endoplasmic reticulum"/>
    <property type="evidence" value="ECO:0007669"/>
    <property type="project" value="UniProtKB-SubCell"/>
</dbReference>
<dbReference type="GO" id="GO:0004197">
    <property type="term" value="F:cysteine-type endopeptidase activity"/>
    <property type="evidence" value="ECO:0007669"/>
    <property type="project" value="InterPro"/>
</dbReference>
<dbReference type="GO" id="GO:0000166">
    <property type="term" value="F:nucleotide binding"/>
    <property type="evidence" value="ECO:0007669"/>
    <property type="project" value="UniProtKB-KW"/>
</dbReference>
<dbReference type="GO" id="GO:0003723">
    <property type="term" value="F:RNA binding"/>
    <property type="evidence" value="ECO:0007669"/>
    <property type="project" value="InterPro"/>
</dbReference>
<dbReference type="GO" id="GO:0003968">
    <property type="term" value="F:RNA-directed RNA polymerase activity"/>
    <property type="evidence" value="ECO:0007669"/>
    <property type="project" value="UniProtKB-KW"/>
</dbReference>
<dbReference type="GO" id="GO:0006351">
    <property type="term" value="P:DNA-templated transcription"/>
    <property type="evidence" value="ECO:0007669"/>
    <property type="project" value="InterPro"/>
</dbReference>
<dbReference type="GO" id="GO:0006508">
    <property type="term" value="P:proteolysis"/>
    <property type="evidence" value="ECO:0007669"/>
    <property type="project" value="UniProtKB-KW"/>
</dbReference>
<dbReference type="GO" id="GO:0039694">
    <property type="term" value="P:viral RNA genome replication"/>
    <property type="evidence" value="ECO:0007669"/>
    <property type="project" value="InterPro"/>
</dbReference>
<dbReference type="Gene3D" id="3.30.70.270">
    <property type="match status" value="1"/>
</dbReference>
<dbReference type="InterPro" id="IPR043502">
    <property type="entry name" value="DNA/RNA_pol_sf"/>
</dbReference>
<dbReference type="InterPro" id="IPR044067">
    <property type="entry name" value="PCV_3C_PRO"/>
</dbReference>
<dbReference type="InterPro" id="IPR043128">
    <property type="entry name" value="Rev_trsase/Diguanyl_cyclase"/>
</dbReference>
<dbReference type="InterPro" id="IPR001205">
    <property type="entry name" value="RNA-dir_pol_C"/>
</dbReference>
<dbReference type="InterPro" id="IPR007094">
    <property type="entry name" value="RNA-dir_pol_PSvirus"/>
</dbReference>
<dbReference type="Pfam" id="PF00680">
    <property type="entry name" value="RdRP_1"/>
    <property type="match status" value="1"/>
</dbReference>
<dbReference type="SUPFAM" id="SSF56672">
    <property type="entry name" value="DNA/RNA polymerases"/>
    <property type="match status" value="1"/>
</dbReference>
<dbReference type="PROSITE" id="PS51874">
    <property type="entry name" value="PCV_3C_PRO"/>
    <property type="match status" value="1"/>
</dbReference>
<dbReference type="PROSITE" id="PS50507">
    <property type="entry name" value="RDRP_SSRNA_POS"/>
    <property type="match status" value="1"/>
</dbReference>
<comment type="function">
    <molecule>Picornain 3C-like protease</molecule>
    <text evidence="1">Thiol protease that cleaves the RNA1 and RNA2 polyproteins.</text>
</comment>
<comment type="function">
    <molecule>RNA-directed RNA polymerase</molecule>
    <text evidence="1">Replicates the viral genome.</text>
</comment>
<comment type="catalytic activity">
    <reaction evidence="2">
        <text>RNA(n) + a ribonucleoside 5'-triphosphate = RNA(n+1) + diphosphate</text>
        <dbReference type="Rhea" id="RHEA:21248"/>
        <dbReference type="Rhea" id="RHEA-COMP:14527"/>
        <dbReference type="Rhea" id="RHEA-COMP:17342"/>
        <dbReference type="ChEBI" id="CHEBI:33019"/>
        <dbReference type="ChEBI" id="CHEBI:61557"/>
        <dbReference type="ChEBI" id="CHEBI:140395"/>
        <dbReference type="EC" id="2.7.7.48"/>
    </reaction>
</comment>
<comment type="subcellular location">
    <molecule>RNA-directed RNA polymerase</molecule>
    <subcellularLocation>
        <location evidence="1">Host endoplasmic reticulum</location>
    </subcellularLocation>
</comment>
<comment type="PTM">
    <molecule>RNA1 polyprotein</molecule>
    <text evidence="1">Specific enzymatic cleavages by picornain 3C-like protease in vivo yield mature proteins. Picornain 3C-like protease is autocatalytically processed.</text>
</comment>
<organismHost>
    <name type="scientific">Solanum tuberosum</name>
    <name type="common">Potato</name>
    <dbReference type="NCBI Taxonomy" id="4113"/>
</organismHost>
<organism>
    <name type="scientific">Andean potato mottle virus</name>
    <name type="common">APMV</name>
    <dbReference type="NCBI Taxonomy" id="12259"/>
    <lineage>
        <taxon>Viruses</taxon>
        <taxon>Riboviria</taxon>
        <taxon>Orthornavirae</taxon>
        <taxon>Pisuviricota</taxon>
        <taxon>Pisoniviricetes</taxon>
        <taxon>Picornavirales</taxon>
        <taxon>Secoviridae</taxon>
        <taxon>Comovirinae</taxon>
        <taxon>Comovirus</taxon>
        <taxon>Comovirus andesense</taxon>
    </lineage>
</organism>
<sequence length="729" mass="82621">GIHVAGGRGKGYACLMPPLRPKAQAQSAQEHFEIFPYEQETNAGLALVGELKQGVYVSCPTKTSFERTPESYHLGLPCEKEPSILSSHDPRIPEHVEGYCPFRAGIQKYANPMGHLDHDLMYEVAHDMQESWHDCVQDFTFPEVDLETAINGIDMVEYMECIPKSTSEGFPHVLSRAPGEKGKMRFLEGDGEKFSLREGTSVKKAYDLLQEEIDRSVPTLVAIECPKDEKLPLRKIYTSPKTRCFSILPMEYNLLVRQKFLHFVRFMMKRRDVLPSQVGVNPYSLEWGAIARRLQEVGNSILCCDYSSFDGLMSSQVMSCIADTMNDFMGGDVSLKRQRKNLLMACCSRFSVVKGNVWRVEGGIPSGFPLTVVMNGIFNELLVRYCFKKIMREGGATPLECSAFDSYIRFVVYGDDNLISVSPVIHDKFNGKLLKECMARFGVTITDGKDKTLPTLEFRPLEDCDFLKRGFIQRSELVWDAPEERSSLYTQLHYVSTKMQSLEDAYTGNLVNVIRELYMHSPKEASDLRRKALRDLPWLSRSKIGTMENVQAFYAMQRAGYRMDESIDVICDLAKLGKYVKGEACKEIVWLTPTVGACDLRYFDWQNAKVDEFWVLCQTNYHEFDENRVMQLCWTPGSGRGGLPTAHWLRTCMLLEKGNVRKKLHWAMAEKKKIIFCAKGGVLIPTVMAGIFLSKEDPMLNLAGVSTLTCAMESVKTLGFLKEGNLNLF</sequence>
<feature type="chain" id="PRO_0000445833" description="RNA1 polyprotein">
    <location>
        <begin position="1" status="less than"/>
        <end position="729"/>
    </location>
</feature>
<feature type="chain" id="PRO_0000036999" description="Picornain 3C-like protease">
    <location>
        <begin position="1" status="less than"/>
        <end position="26"/>
    </location>
</feature>
<feature type="chain" id="PRO_0000037000" description="RNA-directed RNA polymerase">
    <location>
        <begin position="27"/>
        <end position="729"/>
    </location>
</feature>
<feature type="domain" description="Peptidase C3" evidence="3">
    <location>
        <begin position="1" status="less than"/>
        <end position="21"/>
    </location>
</feature>
<feature type="domain" description="RdRp catalytic" evidence="2">
    <location>
        <begin position="299"/>
        <end position="429"/>
    </location>
</feature>
<feature type="site" description="Cleavage; by viral protease" evidence="1">
    <location>
        <begin position="26"/>
        <end position="27"/>
    </location>
</feature>
<feature type="non-terminal residue">
    <location>
        <position position="1"/>
    </location>
</feature>
<keyword id="KW-0191">Covalent protein-RNA linkage</keyword>
<keyword id="KW-1038">Host endoplasmic reticulum</keyword>
<keyword id="KW-0378">Hydrolase</keyword>
<keyword id="KW-0547">Nucleotide-binding</keyword>
<keyword id="KW-0548">Nucleotidyltransferase</keyword>
<keyword id="KW-0645">Protease</keyword>
<keyword id="KW-0696">RNA-directed RNA polymerase</keyword>
<keyword id="KW-0788">Thiol protease</keyword>
<keyword id="KW-0808">Transferase</keyword>
<keyword id="KW-0693">Viral RNA replication</keyword>
<name>POL1_APMV</name>
<reference key="1">
    <citation type="journal article" date="1993" name="J. Gen. Virol.">
        <title>Molecular cloning and sequence analysis of a segment from Andean potato mottle virus B RNA encoding the putative RNA polymerase.</title>
        <authorList>
            <person name="Krengiel R."/>
            <person name="Vicente A.C.P."/>
            <person name="Weyne M."/>
            <person name="Shindo N."/>
            <person name="Brioso P.S.T."/>
            <person name="Felix D.B."/>
            <person name="Villaroel R."/>
            <person name="de Oliveira D.E."/>
            <person name="Timmerman B."/>
        </authorList>
    </citation>
    <scope>NUCLEOTIDE SEQUENCE [GENOMIC RNA]</scope>
    <source>
        <strain>C</strain>
    </source>
</reference>
<protein>
    <recommendedName>
        <fullName>RNA1 polyprotein</fullName>
    </recommendedName>
    <alternativeName>
        <fullName>Genome polyprotein B</fullName>
    </alternativeName>
    <alternativeName>
        <fullName>P1</fullName>
    </alternativeName>
    <component>
        <recommendedName>
            <fullName>Picornain 3C-like protease</fullName>
            <shortName>3C-like protease</shortName>
            <ecNumber>3.4.22.-</ecNumber>
        </recommendedName>
        <alternativeName>
            <fullName>24 kDa protein</fullName>
        </alternativeName>
    </component>
    <component>
        <recommendedName>
            <fullName evidence="2">RNA-directed RNA polymerase</fullName>
            <ecNumber evidence="2">2.7.7.48</ecNumber>
        </recommendedName>
        <alternativeName>
            <fullName>87 kDa protein</fullName>
        </alternativeName>
    </component>
</protein>
<accession>Q02941</accession>
<proteinExistence type="inferred from homology"/>